<keyword id="KW-0448">Lipopolysaccharide biosynthesis</keyword>
<keyword id="KW-1185">Reference proteome</keyword>
<keyword id="KW-0808">Transferase</keyword>
<reference key="1">
    <citation type="journal article" date="1996" name="J. Bacteriol.">
        <title>Organization of the Escherichia coli K-12 gene cluster responsible for production of the extracellular polysaccharide colanic acid.</title>
        <authorList>
            <person name="Stevenson G."/>
            <person name="Andrianopoulos K."/>
            <person name="Hobbs M."/>
            <person name="Reeves P.R."/>
        </authorList>
    </citation>
    <scope>NUCLEOTIDE SEQUENCE [GENOMIC DNA]</scope>
    <source>
        <strain>K12</strain>
    </source>
</reference>
<reference key="2">
    <citation type="submission" date="1998-04" db="EMBL/GenBank/DDBJ databases">
        <authorList>
            <person name="Reeves P.R."/>
        </authorList>
    </citation>
    <scope>SEQUENCE REVISION</scope>
    <source>
        <strain>K12</strain>
    </source>
</reference>
<reference key="3">
    <citation type="journal article" date="1997" name="Science">
        <title>The complete genome sequence of Escherichia coli K-12.</title>
        <authorList>
            <person name="Blattner F.R."/>
            <person name="Plunkett G. III"/>
            <person name="Bloch C.A."/>
            <person name="Perna N.T."/>
            <person name="Burland V."/>
            <person name="Riley M."/>
            <person name="Collado-Vides J."/>
            <person name="Glasner J.D."/>
            <person name="Rode C.K."/>
            <person name="Mayhew G.F."/>
            <person name="Gregor J."/>
            <person name="Davis N.W."/>
            <person name="Kirkpatrick H.A."/>
            <person name="Goeden M.A."/>
            <person name="Rose D.J."/>
            <person name="Mau B."/>
            <person name="Shao Y."/>
        </authorList>
    </citation>
    <scope>NUCLEOTIDE SEQUENCE [LARGE SCALE GENOMIC DNA]</scope>
    <source>
        <strain>K12 / MG1655 / ATCC 47076</strain>
    </source>
</reference>
<reference key="4">
    <citation type="journal article" date="2006" name="Mol. Syst. Biol.">
        <title>Highly accurate genome sequences of Escherichia coli K-12 strains MG1655 and W3110.</title>
        <authorList>
            <person name="Hayashi K."/>
            <person name="Morooka N."/>
            <person name="Yamamoto Y."/>
            <person name="Fujita K."/>
            <person name="Isono K."/>
            <person name="Choi S."/>
            <person name="Ohtsubo E."/>
            <person name="Baba T."/>
            <person name="Wanner B.L."/>
            <person name="Mori H."/>
            <person name="Horiuchi T."/>
        </authorList>
    </citation>
    <scope>NUCLEOTIDE SEQUENCE [LARGE SCALE GENOMIC DNA]</scope>
    <source>
        <strain>K12 / W3110 / ATCC 27325 / DSM 5911</strain>
    </source>
</reference>
<dbReference type="EC" id="2.-.-.-"/>
<dbReference type="EMBL" id="U38473">
    <property type="protein sequence ID" value="AAC77850.1"/>
    <property type="molecule type" value="Genomic_DNA"/>
</dbReference>
<dbReference type="EMBL" id="U00096">
    <property type="protein sequence ID" value="AAC75106.1"/>
    <property type="molecule type" value="Genomic_DNA"/>
</dbReference>
<dbReference type="EMBL" id="AP009048">
    <property type="protein sequence ID" value="BAE76571.1"/>
    <property type="molecule type" value="Genomic_DNA"/>
</dbReference>
<dbReference type="PIR" id="D64970">
    <property type="entry name" value="D64970"/>
</dbReference>
<dbReference type="RefSeq" id="NP_416549.1">
    <property type="nucleotide sequence ID" value="NC_000913.3"/>
</dbReference>
<dbReference type="RefSeq" id="WP_000770780.1">
    <property type="nucleotide sequence ID" value="NZ_LN832404.1"/>
</dbReference>
<dbReference type="BioGRID" id="4261185">
    <property type="interactions" value="181"/>
</dbReference>
<dbReference type="FunCoup" id="P71242">
    <property type="interactions" value="62"/>
</dbReference>
<dbReference type="IntAct" id="P71242">
    <property type="interactions" value="21"/>
</dbReference>
<dbReference type="STRING" id="511145.b2045"/>
<dbReference type="PaxDb" id="511145-b2045"/>
<dbReference type="EnsemblBacteria" id="AAC75106">
    <property type="protein sequence ID" value="AAC75106"/>
    <property type="gene ID" value="b2045"/>
</dbReference>
<dbReference type="GeneID" id="946569"/>
<dbReference type="KEGG" id="ecj:JW2030"/>
<dbReference type="KEGG" id="eco:b2045"/>
<dbReference type="KEGG" id="ecoc:C3026_11515"/>
<dbReference type="PATRIC" id="fig|1411691.4.peg.206"/>
<dbReference type="EchoBASE" id="EB3347"/>
<dbReference type="eggNOG" id="COG2327">
    <property type="taxonomic scope" value="Bacteria"/>
</dbReference>
<dbReference type="HOGENOM" id="CLU_741661_0_0_6"/>
<dbReference type="InParanoid" id="P71242"/>
<dbReference type="OMA" id="IMQQLGM"/>
<dbReference type="OrthoDB" id="3199616at2"/>
<dbReference type="PhylomeDB" id="P71242"/>
<dbReference type="BioCyc" id="EcoCyc:G7096-MONOMER"/>
<dbReference type="BioCyc" id="MetaCyc:G7096-MONOMER"/>
<dbReference type="UniPathway" id="UPA00936"/>
<dbReference type="PRO" id="PR:P71242"/>
<dbReference type="Proteomes" id="UP000000625">
    <property type="component" value="Chromosome"/>
</dbReference>
<dbReference type="GO" id="GO:0016740">
    <property type="term" value="F:transferase activity"/>
    <property type="evidence" value="ECO:0007669"/>
    <property type="project" value="UniProtKB-KW"/>
</dbReference>
<dbReference type="GO" id="GO:0009242">
    <property type="term" value="P:colanic acid biosynthetic process"/>
    <property type="evidence" value="ECO:0000314"/>
    <property type="project" value="EcoCyc"/>
</dbReference>
<dbReference type="GO" id="GO:0009103">
    <property type="term" value="P:lipopolysaccharide biosynthetic process"/>
    <property type="evidence" value="ECO:0007669"/>
    <property type="project" value="UniProtKB-KW"/>
</dbReference>
<dbReference type="GO" id="GO:0045228">
    <property type="term" value="P:slime layer polysaccharide biosynthetic process"/>
    <property type="evidence" value="ECO:0007669"/>
    <property type="project" value="UniProtKB-UniPathway"/>
</dbReference>
<dbReference type="InterPro" id="IPR023918">
    <property type="entry name" value="Colanic_acid_synth_WcaK"/>
</dbReference>
<dbReference type="InterPro" id="IPR007345">
    <property type="entry name" value="Polysacch_pyruvyl_Trfase"/>
</dbReference>
<dbReference type="NCBIfam" id="NF007452">
    <property type="entry name" value="PRK10017.1"/>
    <property type="match status" value="1"/>
</dbReference>
<dbReference type="NCBIfam" id="TIGR04006">
    <property type="entry name" value="wcaK"/>
    <property type="match status" value="1"/>
</dbReference>
<dbReference type="PANTHER" id="PTHR36836">
    <property type="entry name" value="COLANIC ACID BIOSYNTHESIS PROTEIN WCAK"/>
    <property type="match status" value="1"/>
</dbReference>
<dbReference type="PANTHER" id="PTHR36836:SF1">
    <property type="entry name" value="COLANIC ACID BIOSYNTHESIS PROTEIN WCAK"/>
    <property type="match status" value="1"/>
</dbReference>
<dbReference type="Pfam" id="PF04230">
    <property type="entry name" value="PS_pyruv_trans"/>
    <property type="match status" value="1"/>
</dbReference>
<accession>P71242</accession>
<accession>P76380</accession>
<accession>Q2MAY5</accession>
<proteinExistence type="inferred from homology"/>
<gene>
    <name type="primary">wcaK</name>
    <name type="ordered locus">b2045</name>
    <name type="ordered locus">JW2030</name>
</gene>
<evidence type="ECO:0000305" key="1"/>
<sequence>MKLLILGNHTCGNRGDSAILRGLLDAINILNPHAEVDVMSRYPVSSSWLLNRPVMGDPLFLQMKQHNSAAGVVGRVKKVLRRRYQHQVLLSRVTDTGKLRNIAIAQGFTDFVRLLSGYDAIIQVGGSFFVDLYGVPQFEHALCTFMAKKPLFMIGHSVGPFQDEQFNQLANYVFGHCDALILRESVSFDLMKRSNITTAKVEHGVDTAWLVDHHTEDFTASYAVQHWLDVAAQQKTVAITLRELAPFDKRLGTTQQAYEKAFAGVVNRILDEGYQVIALSTCTGIDSYNKDDRMVALNLRQHISDPARYHVVMDELNDLEMGKILGACELTVGTRLHSAIISMNFATPAIAINYEHKSAGIMQQLGLPEMAIDIRHLLDGSLQAMVADTLGQLPALNARLSEAVSRERQTGMQMVQSVLERIGEVK</sequence>
<protein>
    <recommendedName>
        <fullName>Colanic acid biosynthesis protein WcaK</fullName>
        <ecNumber>2.-.-.-</ecNumber>
    </recommendedName>
</protein>
<comment type="pathway">
    <text>Slime biogenesis; slime polysaccharide biosynthesis.</text>
</comment>
<comment type="similarity">
    <text evidence="1">Belongs to the polysaccharide pyruvyl transferase family.</text>
</comment>
<organism>
    <name type="scientific">Escherichia coli (strain K12)</name>
    <dbReference type="NCBI Taxonomy" id="83333"/>
    <lineage>
        <taxon>Bacteria</taxon>
        <taxon>Pseudomonadati</taxon>
        <taxon>Pseudomonadota</taxon>
        <taxon>Gammaproteobacteria</taxon>
        <taxon>Enterobacterales</taxon>
        <taxon>Enterobacteriaceae</taxon>
        <taxon>Escherichia</taxon>
    </lineage>
</organism>
<feature type="chain" id="PRO_0000073216" description="Colanic acid biosynthesis protein WcaK">
    <location>
        <begin position="1"/>
        <end position="426"/>
    </location>
</feature>
<feature type="sequence conflict" description="In Ref. 2; AAC77850." evidence="1" ref="2">
    <original>K</original>
    <variation>I</variation>
    <location>
        <position position="77"/>
    </location>
</feature>
<name>WCAK_ECOLI</name>